<dbReference type="EMBL" id="AK001994">
    <property type="protein sequence ID" value="BAA92026.1"/>
    <property type="status" value="ALT_INIT"/>
    <property type="molecule type" value="mRNA"/>
</dbReference>
<dbReference type="EMBL" id="AK289632">
    <property type="protein sequence ID" value="BAF82321.1"/>
    <property type="molecule type" value="mRNA"/>
</dbReference>
<dbReference type="EMBL" id="AK093342">
    <property type="protein sequence ID" value="BAG52694.1"/>
    <property type="molecule type" value="mRNA"/>
</dbReference>
<dbReference type="EMBL" id="AL137229">
    <property type="status" value="NOT_ANNOTATED_CDS"/>
    <property type="molecule type" value="Genomic_DNA"/>
</dbReference>
<dbReference type="EMBL" id="AL352978">
    <property type="status" value="NOT_ANNOTATED_CDS"/>
    <property type="molecule type" value="Genomic_DNA"/>
</dbReference>
<dbReference type="EMBL" id="BX248266">
    <property type="protein sequence ID" value="CAD62594.1"/>
    <property type="status" value="ALT_INIT"/>
    <property type="molecule type" value="mRNA"/>
</dbReference>
<dbReference type="EMBL" id="BC073137">
    <property type="protein sequence ID" value="AAH73137.2"/>
    <property type="molecule type" value="mRNA"/>
</dbReference>
<dbReference type="EMBL" id="AK223312">
    <property type="protein sequence ID" value="BAD97032.1"/>
    <property type="molecule type" value="mRNA"/>
</dbReference>
<dbReference type="CCDS" id="CCDS45164.1">
    <molecule id="A8K0R7-5"/>
</dbReference>
<dbReference type="CCDS" id="CCDS58336.1">
    <molecule id="A8K0R7-1"/>
</dbReference>
<dbReference type="RefSeq" id="NP_001254756.1">
    <molecule id="A8K0R7-1"/>
    <property type="nucleotide sequence ID" value="NM_001267827.2"/>
</dbReference>
<dbReference type="RefSeq" id="NP_001254757.1">
    <molecule id="A8K0R7-1"/>
    <property type="nucleotide sequence ID" value="NM_001267828.2"/>
</dbReference>
<dbReference type="RefSeq" id="NP_060805.3">
    <molecule id="A8K0R7-5"/>
    <property type="nucleotide sequence ID" value="NM_018335.6"/>
</dbReference>
<dbReference type="RefSeq" id="XP_011535250.1">
    <property type="nucleotide sequence ID" value="XM_011536948.2"/>
</dbReference>
<dbReference type="BioGRID" id="120893">
    <property type="interactions" value="8"/>
</dbReference>
<dbReference type="FunCoup" id="A8K0R7">
    <property type="interactions" value="757"/>
</dbReference>
<dbReference type="IntAct" id="A8K0R7">
    <property type="interactions" value="4"/>
</dbReference>
<dbReference type="STRING" id="9606.ENSP00000399863"/>
<dbReference type="GlyGen" id="A8K0R7">
    <property type="glycosylation" value="1 site, 1 O-linked glycan (1 site)"/>
</dbReference>
<dbReference type="iPTMnet" id="A8K0R7"/>
<dbReference type="PhosphoSitePlus" id="A8K0R7"/>
<dbReference type="BioMuta" id="ZNF839"/>
<dbReference type="jPOST" id="A8K0R7"/>
<dbReference type="MassIVE" id="A8K0R7"/>
<dbReference type="PaxDb" id="9606-ENSP00000399863"/>
<dbReference type="PeptideAtlas" id="A8K0R7"/>
<dbReference type="ProteomicsDB" id="1838">
    <molecule id="A8K0R7-1"/>
</dbReference>
<dbReference type="ProteomicsDB" id="1839">
    <molecule id="A8K0R7-2"/>
</dbReference>
<dbReference type="ProteomicsDB" id="1840">
    <molecule id="A8K0R7-5"/>
</dbReference>
<dbReference type="Antibodypedia" id="27811">
    <property type="antibodies" value="78 antibodies from 23 providers"/>
</dbReference>
<dbReference type="DNASU" id="55778"/>
<dbReference type="Ensembl" id="ENST00000442396.7">
    <molecule id="A8K0R7-5"/>
    <property type="protein sequence ID" value="ENSP00000399863.2"/>
    <property type="gene ID" value="ENSG00000022976.16"/>
</dbReference>
<dbReference type="Ensembl" id="ENST00000558850.5">
    <molecule id="A8K0R7-1"/>
    <property type="protein sequence ID" value="ENSP00000453363.1"/>
    <property type="gene ID" value="ENSG00000022976.16"/>
</dbReference>
<dbReference type="Ensembl" id="ENST00000559185.5">
    <molecule id="A8K0R7-1"/>
    <property type="protein sequence ID" value="ENSP00000453109.1"/>
    <property type="gene ID" value="ENSG00000022976.16"/>
</dbReference>
<dbReference type="GeneID" id="55778"/>
<dbReference type="KEGG" id="hsa:55778"/>
<dbReference type="MANE-Select" id="ENST00000442396.7">
    <molecule id="A8K0R7-5"/>
    <property type="protein sequence ID" value="ENSP00000399863.2"/>
    <property type="RefSeq nucleotide sequence ID" value="NM_018335.6"/>
    <property type="RefSeq protein sequence ID" value="NP_060805.3"/>
</dbReference>
<dbReference type="UCSC" id="uc001ylo.4">
    <molecule id="A8K0R7-1"/>
    <property type="organism name" value="human"/>
</dbReference>
<dbReference type="AGR" id="HGNC:20345"/>
<dbReference type="CTD" id="55778"/>
<dbReference type="DisGeNET" id="55778"/>
<dbReference type="GeneCards" id="ZNF839"/>
<dbReference type="HGNC" id="HGNC:20345">
    <property type="gene designation" value="ZNF839"/>
</dbReference>
<dbReference type="HPA" id="ENSG00000022976">
    <property type="expression patterns" value="Low tissue specificity"/>
</dbReference>
<dbReference type="neXtProt" id="NX_A8K0R7"/>
<dbReference type="OpenTargets" id="ENSG00000022976"/>
<dbReference type="PharmGKB" id="PA162410800"/>
<dbReference type="VEuPathDB" id="HostDB:ENSG00000022976"/>
<dbReference type="eggNOG" id="ENOG502RIPD">
    <property type="taxonomic scope" value="Eukaryota"/>
</dbReference>
<dbReference type="GeneTree" id="ENSGT00390000002751"/>
<dbReference type="HOGENOM" id="CLU_012723_0_0_1"/>
<dbReference type="InParanoid" id="A8K0R7"/>
<dbReference type="OMA" id="CQDYLSG"/>
<dbReference type="OrthoDB" id="5981545at2759"/>
<dbReference type="PAN-GO" id="A8K0R7">
    <property type="GO annotations" value="0 GO annotations based on evolutionary models"/>
</dbReference>
<dbReference type="PhylomeDB" id="A8K0R7"/>
<dbReference type="TreeFam" id="TF328610"/>
<dbReference type="PathwayCommons" id="A8K0R7"/>
<dbReference type="Reactome" id="R-HSA-212436">
    <property type="pathway name" value="Generic Transcription Pathway"/>
</dbReference>
<dbReference type="SignaLink" id="A8K0R7"/>
<dbReference type="BioGRID-ORCS" id="55778">
    <property type="hits" value="27 hits in 1156 CRISPR screens"/>
</dbReference>
<dbReference type="GenomeRNAi" id="55778"/>
<dbReference type="Pharos" id="A8K0R7">
    <property type="development level" value="Tdark"/>
</dbReference>
<dbReference type="PRO" id="PR:A8K0R7"/>
<dbReference type="Proteomes" id="UP000005640">
    <property type="component" value="Chromosome 14"/>
</dbReference>
<dbReference type="RNAct" id="A8K0R7">
    <property type="molecule type" value="protein"/>
</dbReference>
<dbReference type="Bgee" id="ENSG00000022976">
    <property type="expression patterns" value="Expressed in left testis and 180 other cell types or tissues"/>
</dbReference>
<dbReference type="ExpressionAtlas" id="A8K0R7">
    <property type="expression patterns" value="baseline and differential"/>
</dbReference>
<dbReference type="GO" id="GO:0008270">
    <property type="term" value="F:zinc ion binding"/>
    <property type="evidence" value="ECO:0007669"/>
    <property type="project" value="UniProtKB-KW"/>
</dbReference>
<dbReference type="InterPro" id="IPR031885">
    <property type="entry name" value="DUF4764"/>
</dbReference>
<dbReference type="InterPro" id="IPR039946">
    <property type="entry name" value="ZN839"/>
</dbReference>
<dbReference type="InterPro" id="IPR013087">
    <property type="entry name" value="Znf_C2H2_type"/>
</dbReference>
<dbReference type="PANTHER" id="PTHR16116">
    <property type="entry name" value="ZINC FINGER PROTEIN 839"/>
    <property type="match status" value="1"/>
</dbReference>
<dbReference type="PANTHER" id="PTHR16116:SF5">
    <property type="entry name" value="ZINC FINGER PROTEIN 839"/>
    <property type="match status" value="1"/>
</dbReference>
<dbReference type="Pfam" id="PF15961">
    <property type="entry name" value="DUF4764"/>
    <property type="match status" value="1"/>
</dbReference>
<dbReference type="PROSITE" id="PS50157">
    <property type="entry name" value="ZINC_FINGER_C2H2_2"/>
    <property type="match status" value="1"/>
</dbReference>
<comment type="alternative products">
    <event type="alternative splicing"/>
    <isoform>
        <id>A8K0R7-1</id>
        <name>1</name>
        <sequence type="displayed"/>
    </isoform>
    <isoform>
        <id>A8K0R7-2</id>
        <name>2</name>
        <sequence type="described" ref="VSP_032760"/>
    </isoform>
    <isoform>
        <id>A8K0R7-5</id>
        <name>3</name>
        <sequence type="described" ref="VSP_040648"/>
    </isoform>
</comment>
<comment type="sequence caution" evidence="5">
    <conflict type="erroneous initiation">
        <sequence resource="EMBL-CDS" id="BAA92026"/>
    </conflict>
    <text>Truncated N-terminus.</text>
</comment>
<comment type="sequence caution" evidence="5">
    <conflict type="erroneous initiation">
        <sequence resource="EMBL-CDS" id="CAD62594"/>
    </conflict>
    <text>Extended N-terminus.</text>
</comment>
<evidence type="ECO:0000255" key="1">
    <source>
        <dbReference type="PROSITE-ProRule" id="PRU00042"/>
    </source>
</evidence>
<evidence type="ECO:0000256" key="2">
    <source>
        <dbReference type="SAM" id="MobiDB-lite"/>
    </source>
</evidence>
<evidence type="ECO:0000303" key="3">
    <source>
    </source>
</evidence>
<evidence type="ECO:0000303" key="4">
    <source ref="3"/>
</evidence>
<evidence type="ECO:0000305" key="5"/>
<feature type="chain" id="PRO_0000328721" description="Zinc finger protein 839">
    <location>
        <begin position="1"/>
        <end position="811"/>
    </location>
</feature>
<feature type="zinc finger region" description="C2H2-type" evidence="1">
    <location>
        <begin position="197"/>
        <end position="222"/>
    </location>
</feature>
<feature type="region of interest" description="Disordered" evidence="2">
    <location>
        <begin position="329"/>
        <end position="349"/>
    </location>
</feature>
<feature type="region of interest" description="Disordered" evidence="2">
    <location>
        <begin position="455"/>
        <end position="555"/>
    </location>
</feature>
<feature type="region of interest" description="Disordered" evidence="2">
    <location>
        <begin position="612"/>
        <end position="654"/>
    </location>
</feature>
<feature type="compositionally biased region" description="Basic and acidic residues" evidence="2">
    <location>
        <begin position="476"/>
        <end position="485"/>
    </location>
</feature>
<feature type="compositionally biased region" description="Polar residues" evidence="2">
    <location>
        <begin position="501"/>
        <end position="510"/>
    </location>
</feature>
<feature type="splice variant" id="VSP_040648" description="In isoform 3." evidence="4">
    <original>M</original>
    <variation>MADAEPEAGGGSEDGGGGGGPAPPGQSGSVARVAPLGPEQLRQVLEQVTKAQPPPPPPPFVLRDAARRLRDAAQQAALQRGRGTEPPRLPRLLPPQQLEAICVKVTSGETKGQERPM</variation>
    <location>
        <position position="1"/>
    </location>
</feature>
<feature type="splice variant" id="VSP_032760" description="In isoform 2." evidence="3">
    <original>G</original>
    <variation>GEG</variation>
    <location>
        <position position="527"/>
    </location>
</feature>
<feature type="sequence variant" id="VAR_057456" description="In dbSNP:rs1543540.">
    <original>A</original>
    <variation>T</variation>
    <location>
        <position position="314"/>
    </location>
</feature>
<feature type="sequence variant" id="VAR_042468" description="In dbSNP:rs9464.">
    <original>P</original>
    <variation>S</variation>
    <location>
        <position position="531"/>
    </location>
</feature>
<feature type="sequence variant" id="VAR_042469" description="In dbSNP:rs28646161.">
    <original>V</original>
    <variation>M</variation>
    <location>
        <position position="693"/>
    </location>
</feature>
<feature type="sequence variant" id="VAR_042470" description="In dbSNP:rs1053019.">
    <original>F</original>
    <variation>L</variation>
    <location>
        <position position="731"/>
    </location>
</feature>
<feature type="sequence conflict" description="In Ref. 4; AAH73137." evidence="5" ref="4">
    <original>M</original>
    <variation>L</variation>
    <location>
        <position position="411"/>
    </location>
</feature>
<feature type="sequence conflict" description="In Ref. 5; BAD97032." evidence="5" ref="5">
    <original>D</original>
    <variation>G</variation>
    <location>
        <position position="418"/>
    </location>
</feature>
<feature type="sequence conflict" description="In Ref. 1; BAG52694." evidence="5" ref="1">
    <original>K</original>
    <variation>E</variation>
    <location>
        <position position="479"/>
    </location>
</feature>
<feature type="sequence conflict" description="In Ref. 1; BAA92026." evidence="5" ref="1">
    <original>Y</original>
    <variation>C</variation>
    <location>
        <position position="590"/>
    </location>
</feature>
<feature type="sequence conflict" description="In Ref. 5; BAD97032." evidence="5" ref="5">
    <original>K</original>
    <variation>R</variation>
    <location>
        <position position="771"/>
    </location>
</feature>
<gene>
    <name type="primary">ZNF839</name>
    <name type="synonym">C14orf131</name>
</gene>
<protein>
    <recommendedName>
        <fullName>Zinc finger protein 839</fullName>
    </recommendedName>
    <alternativeName>
        <fullName>Renal carcinoma antigen NY-REN-50</fullName>
    </alternativeName>
</protein>
<keyword id="KW-0025">Alternative splicing</keyword>
<keyword id="KW-0479">Metal-binding</keyword>
<keyword id="KW-1267">Proteomics identification</keyword>
<keyword id="KW-1185">Reference proteome</keyword>
<keyword id="KW-0862">Zinc</keyword>
<keyword id="KW-0863">Zinc-finger</keyword>
<reference key="1">
    <citation type="journal article" date="2004" name="Nat. Genet.">
        <title>Complete sequencing and characterization of 21,243 full-length human cDNAs.</title>
        <authorList>
            <person name="Ota T."/>
            <person name="Suzuki Y."/>
            <person name="Nishikawa T."/>
            <person name="Otsuki T."/>
            <person name="Sugiyama T."/>
            <person name="Irie R."/>
            <person name="Wakamatsu A."/>
            <person name="Hayashi K."/>
            <person name="Sato H."/>
            <person name="Nagai K."/>
            <person name="Kimura K."/>
            <person name="Makita H."/>
            <person name="Sekine M."/>
            <person name="Obayashi M."/>
            <person name="Nishi T."/>
            <person name="Shibahara T."/>
            <person name="Tanaka T."/>
            <person name="Ishii S."/>
            <person name="Yamamoto J."/>
            <person name="Saito K."/>
            <person name="Kawai Y."/>
            <person name="Isono Y."/>
            <person name="Nakamura Y."/>
            <person name="Nagahari K."/>
            <person name="Murakami K."/>
            <person name="Yasuda T."/>
            <person name="Iwayanagi T."/>
            <person name="Wagatsuma M."/>
            <person name="Shiratori A."/>
            <person name="Sudo H."/>
            <person name="Hosoiri T."/>
            <person name="Kaku Y."/>
            <person name="Kodaira H."/>
            <person name="Kondo H."/>
            <person name="Sugawara M."/>
            <person name="Takahashi M."/>
            <person name="Kanda K."/>
            <person name="Yokoi T."/>
            <person name="Furuya T."/>
            <person name="Kikkawa E."/>
            <person name="Omura Y."/>
            <person name="Abe K."/>
            <person name="Kamihara K."/>
            <person name="Katsuta N."/>
            <person name="Sato K."/>
            <person name="Tanikawa M."/>
            <person name="Yamazaki M."/>
            <person name="Ninomiya K."/>
            <person name="Ishibashi T."/>
            <person name="Yamashita H."/>
            <person name="Murakawa K."/>
            <person name="Fujimori K."/>
            <person name="Tanai H."/>
            <person name="Kimata M."/>
            <person name="Watanabe M."/>
            <person name="Hiraoka S."/>
            <person name="Chiba Y."/>
            <person name="Ishida S."/>
            <person name="Ono Y."/>
            <person name="Takiguchi S."/>
            <person name="Watanabe S."/>
            <person name="Yosida M."/>
            <person name="Hotuta T."/>
            <person name="Kusano J."/>
            <person name="Kanehori K."/>
            <person name="Takahashi-Fujii A."/>
            <person name="Hara H."/>
            <person name="Tanase T.-O."/>
            <person name="Nomura Y."/>
            <person name="Togiya S."/>
            <person name="Komai F."/>
            <person name="Hara R."/>
            <person name="Takeuchi K."/>
            <person name="Arita M."/>
            <person name="Imose N."/>
            <person name="Musashino K."/>
            <person name="Yuuki H."/>
            <person name="Oshima A."/>
            <person name="Sasaki N."/>
            <person name="Aotsuka S."/>
            <person name="Yoshikawa Y."/>
            <person name="Matsunawa H."/>
            <person name="Ichihara T."/>
            <person name="Shiohata N."/>
            <person name="Sano S."/>
            <person name="Moriya S."/>
            <person name="Momiyama H."/>
            <person name="Satoh N."/>
            <person name="Takami S."/>
            <person name="Terashima Y."/>
            <person name="Suzuki O."/>
            <person name="Nakagawa S."/>
            <person name="Senoh A."/>
            <person name="Mizoguchi H."/>
            <person name="Goto Y."/>
            <person name="Shimizu F."/>
            <person name="Wakebe H."/>
            <person name="Hishigaki H."/>
            <person name="Watanabe T."/>
            <person name="Sugiyama A."/>
            <person name="Takemoto M."/>
            <person name="Kawakami B."/>
            <person name="Yamazaki M."/>
            <person name="Watanabe K."/>
            <person name="Kumagai A."/>
            <person name="Itakura S."/>
            <person name="Fukuzumi Y."/>
            <person name="Fujimori Y."/>
            <person name="Komiyama M."/>
            <person name="Tashiro H."/>
            <person name="Tanigami A."/>
            <person name="Fujiwara T."/>
            <person name="Ono T."/>
            <person name="Yamada K."/>
            <person name="Fujii Y."/>
            <person name="Ozaki K."/>
            <person name="Hirao M."/>
            <person name="Ohmori Y."/>
            <person name="Kawabata A."/>
            <person name="Hikiji T."/>
            <person name="Kobatake N."/>
            <person name="Inagaki H."/>
            <person name="Ikema Y."/>
            <person name="Okamoto S."/>
            <person name="Okitani R."/>
            <person name="Kawakami T."/>
            <person name="Noguchi S."/>
            <person name="Itoh T."/>
            <person name="Shigeta K."/>
            <person name="Senba T."/>
            <person name="Matsumura K."/>
            <person name="Nakajima Y."/>
            <person name="Mizuno T."/>
            <person name="Morinaga M."/>
            <person name="Sasaki M."/>
            <person name="Togashi T."/>
            <person name="Oyama M."/>
            <person name="Hata H."/>
            <person name="Watanabe M."/>
            <person name="Komatsu T."/>
            <person name="Mizushima-Sugano J."/>
            <person name="Satoh T."/>
            <person name="Shirai Y."/>
            <person name="Takahashi Y."/>
            <person name="Nakagawa K."/>
            <person name="Okumura K."/>
            <person name="Nagase T."/>
            <person name="Nomura N."/>
            <person name="Kikuchi H."/>
            <person name="Masuho Y."/>
            <person name="Yamashita R."/>
            <person name="Nakai K."/>
            <person name="Yada T."/>
            <person name="Nakamura Y."/>
            <person name="Ohara O."/>
            <person name="Isogai T."/>
            <person name="Sugano S."/>
        </authorList>
    </citation>
    <scope>NUCLEOTIDE SEQUENCE [LARGE SCALE MRNA] (ISOFORM 1)</scope>
    <source>
        <tissue>Amygdala</tissue>
        <tissue>Placenta</tissue>
        <tissue>Testis</tissue>
    </source>
</reference>
<reference key="2">
    <citation type="journal article" date="2003" name="Nature">
        <title>The DNA sequence and analysis of human chromosome 14.</title>
        <authorList>
            <person name="Heilig R."/>
            <person name="Eckenberg R."/>
            <person name="Petit J.-L."/>
            <person name="Fonknechten N."/>
            <person name="Da Silva C."/>
            <person name="Cattolico L."/>
            <person name="Levy M."/>
            <person name="Barbe V."/>
            <person name="De Berardinis V."/>
            <person name="Ureta-Vidal A."/>
            <person name="Pelletier E."/>
            <person name="Vico V."/>
            <person name="Anthouard V."/>
            <person name="Rowen L."/>
            <person name="Madan A."/>
            <person name="Qin S."/>
            <person name="Sun H."/>
            <person name="Du H."/>
            <person name="Pepin K."/>
            <person name="Artiguenave F."/>
            <person name="Robert C."/>
            <person name="Cruaud C."/>
            <person name="Bruels T."/>
            <person name="Jaillon O."/>
            <person name="Friedlander L."/>
            <person name="Samson G."/>
            <person name="Brottier P."/>
            <person name="Cure S."/>
            <person name="Segurens B."/>
            <person name="Aniere F."/>
            <person name="Samain S."/>
            <person name="Crespeau H."/>
            <person name="Abbasi N."/>
            <person name="Aiach N."/>
            <person name="Boscus D."/>
            <person name="Dickhoff R."/>
            <person name="Dors M."/>
            <person name="Dubois I."/>
            <person name="Friedman C."/>
            <person name="Gouyvenoux M."/>
            <person name="James R."/>
            <person name="Madan A."/>
            <person name="Mairey-Estrada B."/>
            <person name="Mangenot S."/>
            <person name="Martins N."/>
            <person name="Menard M."/>
            <person name="Oztas S."/>
            <person name="Ratcliffe A."/>
            <person name="Shaffer T."/>
            <person name="Trask B."/>
            <person name="Vacherie B."/>
            <person name="Bellemere C."/>
            <person name="Belser C."/>
            <person name="Besnard-Gonnet M."/>
            <person name="Bartol-Mavel D."/>
            <person name="Boutard M."/>
            <person name="Briez-Silla S."/>
            <person name="Combette S."/>
            <person name="Dufosse-Laurent V."/>
            <person name="Ferron C."/>
            <person name="Lechaplais C."/>
            <person name="Louesse C."/>
            <person name="Muselet D."/>
            <person name="Magdelenat G."/>
            <person name="Pateau E."/>
            <person name="Petit E."/>
            <person name="Sirvain-Trukniewicz P."/>
            <person name="Trybou A."/>
            <person name="Vega-Czarny N."/>
            <person name="Bataille E."/>
            <person name="Bluet E."/>
            <person name="Bordelais I."/>
            <person name="Dubois M."/>
            <person name="Dumont C."/>
            <person name="Guerin T."/>
            <person name="Haffray S."/>
            <person name="Hammadi R."/>
            <person name="Muanga J."/>
            <person name="Pellouin V."/>
            <person name="Robert D."/>
            <person name="Wunderle E."/>
            <person name="Gauguet G."/>
            <person name="Roy A."/>
            <person name="Sainte-Marthe L."/>
            <person name="Verdier J."/>
            <person name="Verdier-Discala C."/>
            <person name="Hillier L.W."/>
            <person name="Fulton L."/>
            <person name="McPherson J."/>
            <person name="Matsuda F."/>
            <person name="Wilson R."/>
            <person name="Scarpelli C."/>
            <person name="Gyapay G."/>
            <person name="Wincker P."/>
            <person name="Saurin W."/>
            <person name="Quetier F."/>
            <person name="Waterston R."/>
            <person name="Hood L."/>
            <person name="Weissenbach J."/>
        </authorList>
    </citation>
    <scope>NUCLEOTIDE SEQUENCE [LARGE SCALE GENOMIC DNA]</scope>
</reference>
<reference key="3">
    <citation type="submission" date="2003-02" db="EMBL/GenBank/DDBJ databases">
        <title>Full-length cDNA libraries and normalization.</title>
        <authorList>
            <person name="Li W.B."/>
            <person name="Gruber C."/>
            <person name="Jessee J."/>
            <person name="Polayes D."/>
        </authorList>
    </citation>
    <scope>NUCLEOTIDE SEQUENCE [LARGE SCALE MRNA] OF 1-340 (ISOFORM 3)</scope>
    <source>
        <tissue>Neuroblastoma</tissue>
    </source>
</reference>
<reference key="4">
    <citation type="journal article" date="2004" name="Genome Res.">
        <title>The status, quality, and expansion of the NIH full-length cDNA project: the Mammalian Gene Collection (MGC).</title>
        <authorList>
            <consortium name="The MGC Project Team"/>
        </authorList>
    </citation>
    <scope>NUCLEOTIDE SEQUENCE [LARGE SCALE MRNA] OF 288-811 (ISOFORM 2)</scope>
    <source>
        <tissue>Lung</tissue>
        <tissue>PNS</tissue>
    </source>
</reference>
<reference key="5">
    <citation type="submission" date="2005-04" db="EMBL/GenBank/DDBJ databases">
        <authorList>
            <person name="Suzuki Y."/>
            <person name="Sugano S."/>
            <person name="Totoki Y."/>
            <person name="Toyoda A."/>
            <person name="Takeda T."/>
            <person name="Sakaki Y."/>
            <person name="Tanaka A."/>
            <person name="Yokoyama S."/>
        </authorList>
    </citation>
    <scope>NUCLEOTIDE SEQUENCE [LARGE SCALE MRNA] OF 414-811</scope>
    <source>
        <tissue>Thymus</tissue>
    </source>
</reference>
<accession>A8K0R7</accession>
<accession>B3KSD2</accession>
<accession>Q53FH5</accession>
<accession>Q6GPI5</accession>
<accession>Q86TU1</accession>
<accession>Q9BQ86</accession>
<accession>Q9NUU3</accession>
<proteinExistence type="evidence at protein level"/>
<sequence>MLLPTTIQPQTARKSQLPRGNSCLVGLHIASPQLLRVQPLVRTEPQSCFLSDLCQPPAQGFVQRPLPALQVVPAKRVPAPKAPDEQGSMLTPLSASDPLAVTSLSSSSAHPFISNLHTRHTEKLKKSLKVKTRSGRVSRPPKYKAKDYKFIKTEDLADGHLSDSDDYSELCVEEDEDQRERHALFDLSSCSLRPKSFKCQTCEKSYIGKGGLARHFKLNPGHGQLDPEMVLSEKASGSTLRGCTEERTLSLTSLGLSMPADPCEGGARSCLVTESARGGLQNGQSVDVEETLPSEPENGALLRSERYQGPRRRACSETLAESRTAVLQQRRAAQLPGGPAAAGEQRASPSKARLKEFLQQCDREDLVELALPQLAQVVTVYEFLLMKVEKDHLAKPFFPAIYKEFEELHKMVKKMCQDYLSSSGLCSQETLEINNDKVAESLGITEFLRKKEIHPDNLGPKHLSRDMDGEQLEGASSEKREREAAEEGLASVKRPRREALSNDTTESLAANSRGREKPRPLHALAAGFSPPVNVTVSPRSEESHTTTVSGGNGSVFQAGPQLQALANLEARRGSIGAALSSRDVSGLPVYAQSGEPRRLTQAQVAAFPGENALEHSSDQDTWDSLRSPGFCSPLSSGGGAESLPPGGPGHAEAGHLGKVCDFHLNHQQPSPTSVLPTEVAAPPLEKILSVDSVAVDCAYRTVPKPGPQPGPHGSLLTEGCLRSLSGDLNRFPCGMEVHSGQRELESVVAVGEAMAFEISNGSHELLSQGQKQIFIQTSDGLILSPPGTIVSQEEDIVTVTDAEGRACGWAR</sequence>
<organism>
    <name type="scientific">Homo sapiens</name>
    <name type="common">Human</name>
    <dbReference type="NCBI Taxonomy" id="9606"/>
    <lineage>
        <taxon>Eukaryota</taxon>
        <taxon>Metazoa</taxon>
        <taxon>Chordata</taxon>
        <taxon>Craniata</taxon>
        <taxon>Vertebrata</taxon>
        <taxon>Euteleostomi</taxon>
        <taxon>Mammalia</taxon>
        <taxon>Eutheria</taxon>
        <taxon>Euarchontoglires</taxon>
        <taxon>Primates</taxon>
        <taxon>Haplorrhini</taxon>
        <taxon>Catarrhini</taxon>
        <taxon>Hominidae</taxon>
        <taxon>Homo</taxon>
    </lineage>
</organism>
<name>ZN839_HUMAN</name>